<accession>Q5ZU30</accession>
<gene>
    <name type="primary">setA</name>
    <name type="ordered locus">lpg1978</name>
</gene>
<name>SETA_LEGPH</name>
<proteinExistence type="evidence at protein level"/>
<dbReference type="EC" id="2.4.1.-"/>
<dbReference type="EMBL" id="AE017354">
    <property type="protein sequence ID" value="AAU28047.1"/>
    <property type="molecule type" value="Genomic_DNA"/>
</dbReference>
<dbReference type="RefSeq" id="WP_010947694.1">
    <property type="nucleotide sequence ID" value="NC_002942.5"/>
</dbReference>
<dbReference type="RefSeq" id="YP_095994.1">
    <property type="nucleotide sequence ID" value="NC_002942.5"/>
</dbReference>
<dbReference type="PDB" id="7TOD">
    <property type="method" value="NMR"/>
    <property type="chains" value="A=522-629"/>
</dbReference>
<dbReference type="PDB" id="8X4J">
    <property type="method" value="X-ray"/>
    <property type="resolution" value="2.54 A"/>
    <property type="chains" value="A=14-475"/>
</dbReference>
<dbReference type="PDB" id="8X4K">
    <property type="method" value="X-ray"/>
    <property type="resolution" value="1.90 A"/>
    <property type="chains" value="A=26-475"/>
</dbReference>
<dbReference type="PDB" id="8X4M">
    <property type="method" value="X-ray"/>
    <property type="resolution" value="1.79 A"/>
    <property type="chains" value="A=26-475"/>
</dbReference>
<dbReference type="PDB" id="8X4N">
    <property type="method" value="X-ray"/>
    <property type="resolution" value="2.46 A"/>
    <property type="chains" value="A/B=528-644"/>
</dbReference>
<dbReference type="PDBsum" id="7TOD"/>
<dbReference type="PDBsum" id="8X4J"/>
<dbReference type="PDBsum" id="8X4K"/>
<dbReference type="PDBsum" id="8X4M"/>
<dbReference type="PDBsum" id="8X4N"/>
<dbReference type="SMR" id="Q5ZU30"/>
<dbReference type="IntAct" id="Q5ZU30">
    <property type="interactions" value="3"/>
</dbReference>
<dbReference type="MINT" id="Q5ZU30"/>
<dbReference type="STRING" id="272624.lpg1978"/>
<dbReference type="PaxDb" id="272624-lpg1978"/>
<dbReference type="DNASU" id="3078498"/>
<dbReference type="GeneID" id="57035971"/>
<dbReference type="KEGG" id="lpn:lpg1978"/>
<dbReference type="PATRIC" id="fig|272624.6.peg.2071"/>
<dbReference type="eggNOG" id="COG3774">
    <property type="taxonomic scope" value="Bacteria"/>
</dbReference>
<dbReference type="HOGENOM" id="CLU_433330_0_0_6"/>
<dbReference type="OrthoDB" id="5643872at2"/>
<dbReference type="Proteomes" id="UP000000609">
    <property type="component" value="Chromosome"/>
</dbReference>
<dbReference type="GO" id="GO:0005576">
    <property type="term" value="C:extracellular region"/>
    <property type="evidence" value="ECO:0007669"/>
    <property type="project" value="UniProtKB-SubCell"/>
</dbReference>
<dbReference type="GO" id="GO:0016020">
    <property type="term" value="C:membrane"/>
    <property type="evidence" value="ECO:0007669"/>
    <property type="project" value="GOC"/>
</dbReference>
<dbReference type="GO" id="GO:0000030">
    <property type="term" value="F:mannosyltransferase activity"/>
    <property type="evidence" value="ECO:0007669"/>
    <property type="project" value="TreeGrafter"/>
</dbReference>
<dbReference type="GO" id="GO:0051999">
    <property type="term" value="P:mannosyl-inositol phosphorylceramide biosynthetic process"/>
    <property type="evidence" value="ECO:0007669"/>
    <property type="project" value="TreeGrafter"/>
</dbReference>
<dbReference type="Gene3D" id="3.90.550.20">
    <property type="match status" value="1"/>
</dbReference>
<dbReference type="InterPro" id="IPR051706">
    <property type="entry name" value="Glycosyltransferase_domain"/>
</dbReference>
<dbReference type="InterPro" id="IPR007577">
    <property type="entry name" value="GlycoTrfase_DXD_sugar-bd_CS"/>
</dbReference>
<dbReference type="InterPro" id="IPR029044">
    <property type="entry name" value="Nucleotide-diphossugar_trans"/>
</dbReference>
<dbReference type="PANTHER" id="PTHR32385:SF15">
    <property type="entry name" value="INOSITOL PHOSPHOCERAMIDE MANNOSYLTRANSFERASE 1"/>
    <property type="match status" value="1"/>
</dbReference>
<dbReference type="PANTHER" id="PTHR32385">
    <property type="entry name" value="MANNOSYL PHOSPHORYLINOSITOL CERAMIDE SYNTHASE"/>
    <property type="match status" value="1"/>
</dbReference>
<dbReference type="Pfam" id="PF04488">
    <property type="entry name" value="Gly_transf_sug"/>
    <property type="match status" value="1"/>
</dbReference>
<dbReference type="SUPFAM" id="SSF53448">
    <property type="entry name" value="Nucleotide-diphospho-sugar transferases"/>
    <property type="match status" value="1"/>
</dbReference>
<reference key="1">
    <citation type="journal article" date="2004" name="Science">
        <title>The genomic sequence of the accidental pathogen Legionella pneumophila.</title>
        <authorList>
            <person name="Chien M."/>
            <person name="Morozova I."/>
            <person name="Shi S."/>
            <person name="Sheng H."/>
            <person name="Chen J."/>
            <person name="Gomez S.M."/>
            <person name="Asamani G."/>
            <person name="Hill K."/>
            <person name="Nuara J."/>
            <person name="Feder M."/>
            <person name="Rineer J."/>
            <person name="Greenberg J.J."/>
            <person name="Steshenko V."/>
            <person name="Park S.H."/>
            <person name="Zhao B."/>
            <person name="Teplitskaya E."/>
            <person name="Edwards J.R."/>
            <person name="Pampou S."/>
            <person name="Georghiou A."/>
            <person name="Chou I.-C."/>
            <person name="Iannuccilli W."/>
            <person name="Ulz M.E."/>
            <person name="Kim D.H."/>
            <person name="Geringer-Sameth A."/>
            <person name="Goldsberry C."/>
            <person name="Morozov P."/>
            <person name="Fischer S.G."/>
            <person name="Segal G."/>
            <person name="Qu X."/>
            <person name="Rzhetsky A."/>
            <person name="Zhang P."/>
            <person name="Cayanis E."/>
            <person name="De Jong P.J."/>
            <person name="Ju J."/>
            <person name="Kalachikov S."/>
            <person name="Shuman H.A."/>
            <person name="Russo J.J."/>
        </authorList>
    </citation>
    <scope>NUCLEOTIDE SEQUENCE [LARGE SCALE GENOMIC DNA]</scope>
    <source>
        <strain>Philadelphia 1 / ATCC 33152 / DSM 7513</strain>
    </source>
</reference>
<reference key="2">
    <citation type="journal article" date="2009" name="Cell. Microbiol.">
        <title>Large-scale identification of Legionella pneumophila Dot/Icm substrates that modulate host cell vesicle trafficking pathways.</title>
        <authorList>
            <person name="Heidtman M."/>
            <person name="Chen E.J."/>
            <person name="Moy M.Y."/>
            <person name="Isberg R.R."/>
        </authorList>
    </citation>
    <scope>FUNCTION</scope>
    <scope>GENE NAME</scope>
    <scope>SECRETION VIA TYPE IV SECRETION SYSTEM</scope>
    <scope>SUBCELLULAR LOCATION</scope>
    <scope>INDUCTION</scope>
    <scope>DISRUPTION PHENOTYPE</scope>
    <scope>MUTAGENESIS OF 134-ASP--ASP-136</scope>
    <scope>UBIQUITINATION</scope>
    <source>
        <strain>Philadelphia 1 / ATCC 33152 / DSM 7513</strain>
    </source>
</reference>
<reference key="3">
    <citation type="journal article" date="2012" name="Cell. Microbiol.">
        <title>Domain organization of Legionella effector SetA.</title>
        <authorList>
            <person name="Jank T."/>
            <person name="Bohmer K.E."/>
            <person name="Tzivelekidis T."/>
            <person name="Schwan C."/>
            <person name="Belyi Y."/>
            <person name="Aktories K."/>
        </authorList>
    </citation>
    <scope>FUNCTION</scope>
    <scope>CATALYTIC ACTIVITY</scope>
    <scope>DOMAIN</scope>
    <scope>SUBCELLULAR LOCATION</scope>
    <scope>PTDINS(3)P-BINDING</scope>
    <scope>MUTAGENESIS OF 134-ASP--ASP-136</scope>
    <source>
        <strain>Philadelphia 1 / ATCC 33152 / DSM 7513</strain>
    </source>
</reference>
<evidence type="ECO:0000269" key="1">
    <source>
    </source>
</evidence>
<evidence type="ECO:0000269" key="2">
    <source>
    </source>
</evidence>
<evidence type="ECO:0007829" key="3">
    <source>
        <dbReference type="PDB" id="7TOD"/>
    </source>
</evidence>
<protein>
    <recommendedName>
        <fullName>Subversion of eukaryotic traffic protein A</fullName>
    </recommendedName>
    <alternativeName>
        <fullName>Effector protein SetA</fullName>
    </alternativeName>
    <alternativeName>
        <fullName>Subversion of eukaryotic vesicle trafficking A</fullName>
    </alternativeName>
    <domain>
        <recommendedName>
            <fullName>Glucosyltransferase</fullName>
            <ecNumber>2.4.1.-</ecNumber>
        </recommendedName>
    </domain>
    <domain>
        <recommendedName>
            <fullName>Phosphatidylinositol-3-phosphate-binding domain</fullName>
        </recommendedName>
        <alternativeName>
            <fullName>PtdIns(3)P-binding domain</fullName>
        </alternativeName>
    </domain>
</protein>
<sequence>MYKIYSYLGWRIDMKTENLPQAGQEAQIDKKIHFIWVGHIMPQKNIQVVSEWAEKNPGYETIIWVDKKIAPAKELDLFILDMKSKGITVKDINEEGVCRDSIRHELDQESPNYGMVSDMLRLNILAAEGGIYLDSDILCSAPFPDEIYAPFGFLLSPWSQGANNTLCNDIILCSKGNQIIQQLADAIEQSYIARDSFEFTHEYASMKETKGERIAKTLGVTGPGFLFHQLKKMGILNDKSEMEAIHWELQDQRYLIDGSVKEPDYFYVPQNNTNDASWVPSIKRPGIENMSFQERLENAVQLIAFDIQKTGLFNLDHYANELKVKQNSWCIAAETSPELKPDSYLLIRPRDKTGEWTLYYVDEDKKLNPVTLPVIKGAIKLSEVSDPLRKFHTLLSQVSDPVNPTAHELKQIGRALIELKPRQDEWHCKNKWSGAEEIAQELWQRITSNETLRAQIKQCFTQFESLKPRVAELGLTRASGAGTEVEAHESTVKEQEIISQNTVGEEGTKEKNSVQLASENSSDEKIKTAHDLIDEIIQDVIQLDGKLGLLGGNTRQLEDGRVINIPNGAAMIFDDYKKYKQGELTAESALESMIKIAKLSNQLNRHTFFNQRQPETGQFYKKVAAIDLQTTIAAEYDNNHGLRI</sequence>
<keyword id="KW-0002">3D-structure</keyword>
<keyword id="KW-0328">Glycosyltransferase</keyword>
<keyword id="KW-1185">Reference proteome</keyword>
<keyword id="KW-0964">Secreted</keyword>
<keyword id="KW-0808">Transferase</keyword>
<keyword id="KW-0832">Ubl conjugation</keyword>
<keyword id="KW-0843">Virulence</keyword>
<feature type="chain" id="PRO_0000422423" description="Subversion of eukaryotic traffic protein A">
    <location>
        <begin position="1"/>
        <end position="644"/>
    </location>
</feature>
<feature type="region of interest" description="Glucosyltransferase">
    <location>
        <begin position="1"/>
        <end position="400"/>
    </location>
</feature>
<feature type="region of interest" description="PtdIns(3)P-binding and localization domain">
    <location>
        <begin position="401"/>
        <end position="644"/>
    </location>
</feature>
<feature type="mutagenesis site" description="Alleviates the toxicity of SetA to host cell growth, and blocks vesicular sorting defects." evidence="1 2">
    <original>DSD</original>
    <variation>ASA</variation>
    <location>
        <begin position="134"/>
        <end position="136"/>
    </location>
</feature>
<feature type="mutagenesis site" description="Abolishes glucohydrolase and glucosyltransferase activities. Fails to induce any cellular alterations when expressed in mammalian cells." evidence="1 2">
    <original>DSD</original>
    <variation>NSN</variation>
    <location>
        <begin position="134"/>
        <end position="136"/>
    </location>
</feature>
<feature type="helix" evidence="3">
    <location>
        <begin position="529"/>
        <end position="543"/>
    </location>
</feature>
<feature type="turn" evidence="3">
    <location>
        <begin position="549"/>
        <end position="551"/>
    </location>
</feature>
<feature type="strand" evidence="3">
    <location>
        <begin position="553"/>
        <end position="556"/>
    </location>
</feature>
<feature type="strand" evidence="3">
    <location>
        <begin position="562"/>
        <end position="565"/>
    </location>
</feature>
<feature type="helix" evidence="3">
    <location>
        <begin position="567"/>
        <end position="581"/>
    </location>
</feature>
<feature type="helix" evidence="3">
    <location>
        <begin position="586"/>
        <end position="605"/>
    </location>
</feature>
<feature type="helix" evidence="3">
    <location>
        <begin position="609"/>
        <end position="611"/>
    </location>
</feature>
<feature type="helix" evidence="3">
    <location>
        <begin position="614"/>
        <end position="624"/>
    </location>
</feature>
<comment type="function">
    <text evidence="1 2">Secreted effector that interferes with vesicular trafficking of host cells. Possesses glucohydrolase and mono-O-glucosyltransferase activity by using UDP-glucose as a sugar donor substrate. Is able to glucosylate histones H4 and H3.1 in vitro, but it is unlikely that histones are the natural substrates for SetA. May glycosylate a component of the host cell vesicle trafficking machinery during L.pneumophila infection. Binds with high specificity to phosphatidylinositol 3-phosphate (PtdIns(3)P), (with a dissociation constant value of 809 nM), which guides SetA to the cytosolic leaflet of the early phagosome of the host cell.</text>
</comment>
<comment type="interaction">
    <interactant intactId="EBI-40253342">
        <id>Q5ZU30</id>
    </interactant>
    <interactant intactId="EBI-716845">
        <id>P62820</id>
        <label>RAB1A</label>
    </interactant>
    <organismsDiffer>true</organismsDiffer>
    <experiments>3</experiments>
</comment>
<comment type="interaction">
    <interactant intactId="EBI-40253342">
        <id>Q5ZU30</id>
    </interactant>
    <interactant intactId="EBI-1056089">
        <id>P51149</id>
        <label>RAB7A</label>
    </interactant>
    <organismsDiffer>true</organismsDiffer>
    <experiments>2</experiments>
</comment>
<comment type="subcellular location">
    <subcellularLocation>
        <location evidence="1 2">Secreted</location>
    </subcellularLocation>
    <text>Is secreted by the Dot/Icm type IV secretion system (T4SS) into the host cell cytosol. Localizes to vesicular compartments in mammalian cells, more precisely to early endosomes and early Legionella-containing phagosomes. After translocation by the Dot/Icm system, a portion of SetA associates with host cell membranes while another portion of SetA remains in the host cell cytosol.</text>
</comment>
<comment type="induction">
    <text evidence="1">Is induced in the post-exponential phase of growth.</text>
</comment>
<comment type="domain">
    <text evidence="2">Multidomain protein with an N-terminal glucosyltransferase domain and a C-terminal phosphatidylinositol 3-phosphate-binding domain, which guides the Legionella effector to the surface of the Legionella-containing vacuole. Both domains are essential for the cellular effects on the eukaryotic host.</text>
</comment>
<comment type="PTM">
    <text evidence="1">Ubiquitinated and polyubiquitinated when ectopically produced in both yeast and mammalian cells; however it is unsure if this modification occurs during the L.pneumophila infection of host cells.</text>
</comment>
<comment type="disruption phenotype">
    <text evidence="1">Cells lacking this gene grow similarly to wild-type L.pneumophila in both murine bone marrow-derived macrophages and the soil amoeba Dictyostelium discoideum, indicating that SetA is not required for efficient intracellular replication of L.pneumophila in host cells under laboratory growth conditions.</text>
</comment>
<comment type="miscellaneous">
    <text>Production of SetA in yeast is extremely toxic, it causes a severe growth defect and alters yeast cell morphology. When expressed in mammalian cells, SetA causes cell retractation.</text>
</comment>
<organism>
    <name type="scientific">Legionella pneumophila subsp. pneumophila (strain Philadelphia 1 / ATCC 33152 / DSM 7513)</name>
    <dbReference type="NCBI Taxonomy" id="272624"/>
    <lineage>
        <taxon>Bacteria</taxon>
        <taxon>Pseudomonadati</taxon>
        <taxon>Pseudomonadota</taxon>
        <taxon>Gammaproteobacteria</taxon>
        <taxon>Legionellales</taxon>
        <taxon>Legionellaceae</taxon>
        <taxon>Legionella</taxon>
    </lineage>
</organism>